<feature type="chain" id="PRO_0000387878" description="4-hydroxy-2-oxovalerate aldolase">
    <location>
        <begin position="1"/>
        <end position="349"/>
    </location>
</feature>
<feature type="domain" description="Pyruvate carboxyltransferase" evidence="1">
    <location>
        <begin position="7"/>
        <end position="259"/>
    </location>
</feature>
<feature type="active site" description="Proton acceptor" evidence="1">
    <location>
        <position position="19"/>
    </location>
</feature>
<feature type="binding site" evidence="1">
    <location>
        <begin position="15"/>
        <end position="16"/>
    </location>
    <ligand>
        <name>substrate</name>
    </ligand>
</feature>
<feature type="binding site" evidence="1">
    <location>
        <position position="16"/>
    </location>
    <ligand>
        <name>Mn(2+)</name>
        <dbReference type="ChEBI" id="CHEBI:29035"/>
    </ligand>
</feature>
<feature type="binding site" evidence="1">
    <location>
        <position position="169"/>
    </location>
    <ligand>
        <name>substrate</name>
    </ligand>
</feature>
<feature type="binding site" evidence="1">
    <location>
        <position position="198"/>
    </location>
    <ligand>
        <name>Mn(2+)</name>
        <dbReference type="ChEBI" id="CHEBI:29035"/>
    </ligand>
</feature>
<feature type="binding site" evidence="1">
    <location>
        <position position="198"/>
    </location>
    <ligand>
        <name>substrate</name>
    </ligand>
</feature>
<feature type="binding site" evidence="1">
    <location>
        <position position="200"/>
    </location>
    <ligand>
        <name>Mn(2+)</name>
        <dbReference type="ChEBI" id="CHEBI:29035"/>
    </ligand>
</feature>
<feature type="binding site" evidence="1">
    <location>
        <position position="289"/>
    </location>
    <ligand>
        <name>substrate</name>
    </ligand>
</feature>
<feature type="site" description="Transition state stabilizer" evidence="1">
    <location>
        <position position="15"/>
    </location>
</feature>
<dbReference type="EC" id="4.1.3.39" evidence="1"/>
<dbReference type="EMBL" id="CP000317">
    <property type="protein sequence ID" value="ABE47003.1"/>
    <property type="molecule type" value="Genomic_DNA"/>
</dbReference>
<dbReference type="RefSeq" id="WP_011485986.1">
    <property type="nucleotide sequence ID" value="NC_007949.1"/>
</dbReference>
<dbReference type="SMR" id="Q120N9"/>
<dbReference type="KEGG" id="pol:Bpro_5136"/>
<dbReference type="HOGENOM" id="CLU_049173_0_0_4"/>
<dbReference type="OrthoDB" id="9803573at2"/>
<dbReference type="Proteomes" id="UP000001983">
    <property type="component" value="Plasmid pPol360"/>
</dbReference>
<dbReference type="GO" id="GO:0003852">
    <property type="term" value="F:2-isopropylmalate synthase activity"/>
    <property type="evidence" value="ECO:0007669"/>
    <property type="project" value="TreeGrafter"/>
</dbReference>
<dbReference type="GO" id="GO:0008701">
    <property type="term" value="F:4-hydroxy-2-oxovalerate aldolase activity"/>
    <property type="evidence" value="ECO:0007669"/>
    <property type="project" value="UniProtKB-UniRule"/>
</dbReference>
<dbReference type="GO" id="GO:0030145">
    <property type="term" value="F:manganese ion binding"/>
    <property type="evidence" value="ECO:0007669"/>
    <property type="project" value="UniProtKB-UniRule"/>
</dbReference>
<dbReference type="GO" id="GO:0009056">
    <property type="term" value="P:catabolic process"/>
    <property type="evidence" value="ECO:0007669"/>
    <property type="project" value="UniProtKB-KW"/>
</dbReference>
<dbReference type="GO" id="GO:0009098">
    <property type="term" value="P:L-leucine biosynthetic process"/>
    <property type="evidence" value="ECO:0007669"/>
    <property type="project" value="TreeGrafter"/>
</dbReference>
<dbReference type="CDD" id="cd07943">
    <property type="entry name" value="DRE_TIM_HOA"/>
    <property type="match status" value="1"/>
</dbReference>
<dbReference type="FunFam" id="1.10.8.60:FF:000042">
    <property type="entry name" value="4-hydroxy-2-oxovalerate aldolase"/>
    <property type="match status" value="1"/>
</dbReference>
<dbReference type="Gene3D" id="1.10.8.60">
    <property type="match status" value="1"/>
</dbReference>
<dbReference type="Gene3D" id="3.20.20.70">
    <property type="entry name" value="Aldolase class I"/>
    <property type="match status" value="1"/>
</dbReference>
<dbReference type="HAMAP" id="MF_01656">
    <property type="entry name" value="HOA"/>
    <property type="match status" value="1"/>
</dbReference>
<dbReference type="InterPro" id="IPR050073">
    <property type="entry name" value="2-IPM_HCS-like"/>
</dbReference>
<dbReference type="InterPro" id="IPR017629">
    <property type="entry name" value="4OH_2_O-val_aldolase"/>
</dbReference>
<dbReference type="InterPro" id="IPR013785">
    <property type="entry name" value="Aldolase_TIM"/>
</dbReference>
<dbReference type="InterPro" id="IPR012425">
    <property type="entry name" value="DmpG_comm"/>
</dbReference>
<dbReference type="InterPro" id="IPR035685">
    <property type="entry name" value="DRE_TIM_HOA"/>
</dbReference>
<dbReference type="InterPro" id="IPR000891">
    <property type="entry name" value="PYR_CT"/>
</dbReference>
<dbReference type="NCBIfam" id="TIGR03217">
    <property type="entry name" value="4OH_2_O_val_ald"/>
    <property type="match status" value="1"/>
</dbReference>
<dbReference type="NCBIfam" id="NF006049">
    <property type="entry name" value="PRK08195.1"/>
    <property type="match status" value="1"/>
</dbReference>
<dbReference type="PANTHER" id="PTHR10277:SF9">
    <property type="entry name" value="2-ISOPROPYLMALATE SYNTHASE 1, CHLOROPLASTIC-RELATED"/>
    <property type="match status" value="1"/>
</dbReference>
<dbReference type="PANTHER" id="PTHR10277">
    <property type="entry name" value="HOMOCITRATE SYNTHASE-RELATED"/>
    <property type="match status" value="1"/>
</dbReference>
<dbReference type="Pfam" id="PF07836">
    <property type="entry name" value="DmpG_comm"/>
    <property type="match status" value="1"/>
</dbReference>
<dbReference type="Pfam" id="PF00682">
    <property type="entry name" value="HMGL-like"/>
    <property type="match status" value="1"/>
</dbReference>
<dbReference type="SUPFAM" id="SSF51569">
    <property type="entry name" value="Aldolase"/>
    <property type="match status" value="1"/>
</dbReference>
<dbReference type="SUPFAM" id="SSF89000">
    <property type="entry name" value="post-HMGL domain-like"/>
    <property type="match status" value="1"/>
</dbReference>
<dbReference type="PROSITE" id="PS50991">
    <property type="entry name" value="PYR_CT"/>
    <property type="match status" value="1"/>
</dbReference>
<organism>
    <name type="scientific">Polaromonas sp. (strain JS666 / ATCC BAA-500)</name>
    <dbReference type="NCBI Taxonomy" id="296591"/>
    <lineage>
        <taxon>Bacteria</taxon>
        <taxon>Pseudomonadati</taxon>
        <taxon>Pseudomonadota</taxon>
        <taxon>Betaproteobacteria</taxon>
        <taxon>Burkholderiales</taxon>
        <taxon>Comamonadaceae</taxon>
        <taxon>Polaromonas</taxon>
    </lineage>
</organism>
<geneLocation type="plasmid">
    <name>pPol360</name>
</geneLocation>
<protein>
    <recommendedName>
        <fullName evidence="1">4-hydroxy-2-oxovalerate aldolase</fullName>
        <shortName evidence="1">HOA</shortName>
        <ecNumber evidence="1">4.1.3.39</ecNumber>
    </recommendedName>
    <alternativeName>
        <fullName evidence="1">4-hydroxy-2-keto-pentanoic acid aldolase</fullName>
    </alternativeName>
    <alternativeName>
        <fullName evidence="1">4-hydroxy-2-oxopentanoate aldolase</fullName>
    </alternativeName>
</protein>
<comment type="catalytic activity">
    <reaction evidence="1">
        <text>(S)-4-hydroxy-2-oxopentanoate = acetaldehyde + pyruvate</text>
        <dbReference type="Rhea" id="RHEA:22624"/>
        <dbReference type="ChEBI" id="CHEBI:15343"/>
        <dbReference type="ChEBI" id="CHEBI:15361"/>
        <dbReference type="ChEBI" id="CHEBI:73143"/>
        <dbReference type="EC" id="4.1.3.39"/>
    </reaction>
</comment>
<comment type="similarity">
    <text evidence="1">Belongs to the 4-hydroxy-2-oxovalerate aldolase family.</text>
</comment>
<evidence type="ECO:0000255" key="1">
    <source>
        <dbReference type="HAMAP-Rule" id="MF_01656"/>
    </source>
</evidence>
<accession>Q120N9</accession>
<gene>
    <name type="ordered locus">Bpro_5136</name>
</gene>
<reference key="1">
    <citation type="journal article" date="2008" name="Appl. Environ. Microbiol.">
        <title>The genome of Polaromonas sp. strain JS666: insights into the evolution of a hydrocarbon- and xenobiotic-degrading bacterium, and features of relevance to biotechnology.</title>
        <authorList>
            <person name="Mattes T.E."/>
            <person name="Alexander A.K."/>
            <person name="Richardson P.M."/>
            <person name="Munk A.C."/>
            <person name="Han C.S."/>
            <person name="Stothard P."/>
            <person name="Coleman N.V."/>
        </authorList>
    </citation>
    <scope>NUCLEOTIDE SEQUENCE [LARGE SCALE GENOMIC DNA]</scope>
    <source>
        <strain>JS666 / ATCC BAA-500</strain>
        <plasmid>pPol360</plasmid>
    </source>
</reference>
<proteinExistence type="inferred from homology"/>
<name>HOA_POLSJ</name>
<keyword id="KW-0058">Aromatic hydrocarbons catabolism</keyword>
<keyword id="KW-0456">Lyase</keyword>
<keyword id="KW-0464">Manganese</keyword>
<keyword id="KW-0479">Metal-binding</keyword>
<keyword id="KW-0614">Plasmid</keyword>
<keyword id="KW-1185">Reference proteome</keyword>
<sequence length="349" mass="37523">MYNGQKLYISDVTLRDGMHAIRHQYSIDQAVAIAKALDDAKVDSIEVAHGDGLRGSSFNYGFGAHSDLEWIEAVASVLKHARVATLLLPGIGTLHDLDAAFKAGVRTVRVATHCTEADVSRQHIEHARKLGMDTVGFLMMSHMTSPQILAQQAKLMENYGAECIYVVDSGGALSMQQVADRFKAFKDVLKPETQTGMHAHHNLALGVANSIVAVENGCDRIDASLAGMGAGAGNAPLEVFIATADRMGWNHGTDLFGLMNAADDLVRPLQDRPVRVDRETLALGYAGVYSSFLRHAEAASARYGIAAVDILVELGRRRMVGGQEDMIVDVALDLIKTRQRTTGTSGVAA</sequence>